<accession>Q7M323</accession>
<feature type="chain" id="PRO_0000088703" description="Plasminogen">
    <location>
        <begin position="1" status="less than"/>
        <end position="123" status="greater than"/>
    </location>
</feature>
<feature type="domain" description="Kringle" evidence="3">
    <location>
        <begin position="40"/>
        <end position="118"/>
    </location>
</feature>
<feature type="disulfide bond" evidence="3">
    <location>
        <begin position="41"/>
        <end position="118"/>
    </location>
</feature>
<feature type="disulfide bond" evidence="3">
    <location>
        <begin position="62"/>
        <end position="101"/>
    </location>
</feature>
<feature type="disulfide bond" evidence="3">
    <location>
        <begin position="90"/>
        <end position="113"/>
    </location>
</feature>
<feature type="non-terminal residue">
    <location>
        <position position="1"/>
    </location>
</feature>
<feature type="non-terminal residue">
    <location>
        <position position="123"/>
    </location>
</feature>
<evidence type="ECO:0000250" key="1"/>
<evidence type="ECO:0000250" key="2">
    <source>
        <dbReference type="UniProtKB" id="P00747"/>
    </source>
</evidence>
<evidence type="ECO:0000255" key="3">
    <source>
        <dbReference type="PROSITE-ProRule" id="PRU00121"/>
    </source>
</evidence>
<evidence type="ECO:0000305" key="4"/>
<comment type="function">
    <text evidence="1">Plasmin dissolves the fibrin of blood clots and acts as a proteolytic factor in a variety of other processes including embryonic development, tissue remodeling, tumor invasion, and inflammation. In ovulation, weakens the walls of the Graafian follicle. It activates the urokinase-type plasminogen activator, collagenases and several complement zymogens, such as C1, C4 and C5. Cleavage of fibronectin and laminin leads to cell detachment and apoptosis. Also cleaves fibrin, thrombospondin and von Willebrand factor. Its role in tissue remodeling and tumor invasion may be modulated by CSPG4. Binds to cells (By similarity).</text>
</comment>
<comment type="catalytic activity">
    <reaction>
        <text>Preferential cleavage: Lys-|-Xaa &gt; Arg-|-Xaa, higher selectivity than trypsin. Converts fibrin into soluble products.</text>
        <dbReference type="EC" id="3.4.21.7"/>
    </reaction>
</comment>
<comment type="activity regulation">
    <text evidence="1">Converted into plasmin by plasminogen activators, both plasminogen and its activator being bound to fibrin. Cannot be activated with streptokinase (By similarity).</text>
</comment>
<comment type="subunit">
    <text evidence="2">Interacts with CSPG4 and AMOT. Interacts (via the Kringle domains) with HRG; the interaction tethers PLG to the cell surface and enhances its activation. Interacts (via Kringle 4 domain) with ADA; the interaction stimulates PLG activation when in complex with DPP4. Angiostatin: Interacts with ATP5F1A; the interaction inhibits most of the angiogenic effects of angiostatin.</text>
</comment>
<comment type="subcellular location">
    <subcellularLocation>
        <location evidence="1">Secreted</location>
    </subcellularLocation>
    <text evidence="1">Locates to the cell surface where it is proteolytically cleaved to produce the active plasmin. Interaction with HRG tethers it to the cell surface (By similarity).</text>
</comment>
<comment type="domain">
    <text evidence="1">Kringle domains mediate interaction with CSPG4.</text>
</comment>
<comment type="miscellaneous">
    <text evidence="1">Plasmin is inactivated by alpha-2-antiplasmin immediately after dissociation from the clot.</text>
</comment>
<comment type="similarity">
    <text evidence="4">Belongs to the peptidase S1 family. Plasminogen subfamily.</text>
</comment>
<protein>
    <recommendedName>
        <fullName>Plasminogen</fullName>
        <ecNumber>3.4.21.7</ecNumber>
    </recommendedName>
</protein>
<reference key="1">
    <citation type="journal article" date="1988" name="Enzyme">
        <title>Structural aspects of the plasminogen of various species.</title>
        <authorList>
            <person name="Schaller J."/>
            <person name="Rickli E.E."/>
        </authorList>
    </citation>
    <scope>PROTEIN SEQUENCE</scope>
</reference>
<organism>
    <name type="scientific">Capra hircus</name>
    <name type="common">Goat</name>
    <dbReference type="NCBI Taxonomy" id="9925"/>
    <lineage>
        <taxon>Eukaryota</taxon>
        <taxon>Metazoa</taxon>
        <taxon>Chordata</taxon>
        <taxon>Craniata</taxon>
        <taxon>Vertebrata</taxon>
        <taxon>Euteleostomi</taxon>
        <taxon>Mammalia</taxon>
        <taxon>Eutheria</taxon>
        <taxon>Laurasiatheria</taxon>
        <taxon>Artiodactyla</taxon>
        <taxon>Ruminantia</taxon>
        <taxon>Pecora</taxon>
        <taxon>Bovidae</taxon>
        <taxon>Caprinae</taxon>
        <taxon>Capra</taxon>
    </lineage>
</organism>
<keyword id="KW-0094">Blood coagulation</keyword>
<keyword id="KW-0903">Direct protein sequencing</keyword>
<keyword id="KW-1015">Disulfide bond</keyword>
<keyword id="KW-0280">Fibrinolysis</keyword>
<keyword id="KW-0356">Hemostasis</keyword>
<keyword id="KW-0378">Hydrolase</keyword>
<keyword id="KW-0420">Kringle</keyword>
<keyword id="KW-0645">Protease</keyword>
<keyword id="KW-1185">Reference proteome</keyword>
<keyword id="KW-0964">Secreted</keyword>
<keyword id="KW-0720">Serine protease</keyword>
<keyword id="KW-0797">Tissue remodeling</keyword>
<keyword id="KW-0865">Zymogen</keyword>
<dbReference type="EC" id="3.4.21.7"/>
<dbReference type="PIR" id="C61545">
    <property type="entry name" value="C61545"/>
</dbReference>
<dbReference type="SMR" id="Q7M323"/>
<dbReference type="STRING" id="9925.ENSCHIP00000007843"/>
<dbReference type="Proteomes" id="UP000291000">
    <property type="component" value="Unassembled WGS sequence"/>
</dbReference>
<dbReference type="Proteomes" id="UP000694566">
    <property type="component" value="Unplaced"/>
</dbReference>
<dbReference type="GO" id="GO:0005615">
    <property type="term" value="C:extracellular space"/>
    <property type="evidence" value="ECO:0007669"/>
    <property type="project" value="TreeGrafter"/>
</dbReference>
<dbReference type="GO" id="GO:0004252">
    <property type="term" value="F:serine-type endopeptidase activity"/>
    <property type="evidence" value="ECO:0007669"/>
    <property type="project" value="UniProtKB-EC"/>
</dbReference>
<dbReference type="GO" id="GO:0005102">
    <property type="term" value="F:signaling receptor binding"/>
    <property type="evidence" value="ECO:0007669"/>
    <property type="project" value="TreeGrafter"/>
</dbReference>
<dbReference type="GO" id="GO:0007596">
    <property type="term" value="P:blood coagulation"/>
    <property type="evidence" value="ECO:0007669"/>
    <property type="project" value="UniProtKB-KW"/>
</dbReference>
<dbReference type="GO" id="GO:0042730">
    <property type="term" value="P:fibrinolysis"/>
    <property type="evidence" value="ECO:0007669"/>
    <property type="project" value="UniProtKB-KW"/>
</dbReference>
<dbReference type="GO" id="GO:0006508">
    <property type="term" value="P:proteolysis"/>
    <property type="evidence" value="ECO:0007669"/>
    <property type="project" value="UniProtKB-KW"/>
</dbReference>
<dbReference type="GO" id="GO:0048771">
    <property type="term" value="P:tissue remodeling"/>
    <property type="evidence" value="ECO:0007669"/>
    <property type="project" value="UniProtKB-KW"/>
</dbReference>
<dbReference type="CDD" id="cd00108">
    <property type="entry name" value="KR"/>
    <property type="match status" value="1"/>
</dbReference>
<dbReference type="FunFam" id="2.40.20.10:FF:000005">
    <property type="entry name" value="Plasminogen"/>
    <property type="match status" value="1"/>
</dbReference>
<dbReference type="Gene3D" id="2.40.20.10">
    <property type="entry name" value="Plasminogen Kringle 4"/>
    <property type="match status" value="1"/>
</dbReference>
<dbReference type="InterPro" id="IPR000001">
    <property type="entry name" value="Kringle"/>
</dbReference>
<dbReference type="InterPro" id="IPR013806">
    <property type="entry name" value="Kringle-like"/>
</dbReference>
<dbReference type="InterPro" id="IPR018056">
    <property type="entry name" value="Kringle_CS"/>
</dbReference>
<dbReference type="InterPro" id="IPR038178">
    <property type="entry name" value="Kringle_sf"/>
</dbReference>
<dbReference type="InterPro" id="IPR050759">
    <property type="entry name" value="Serine_protease_kringle"/>
</dbReference>
<dbReference type="PANTHER" id="PTHR24261:SF2">
    <property type="entry name" value="LIPOPROTEIN(A)"/>
    <property type="match status" value="1"/>
</dbReference>
<dbReference type="PANTHER" id="PTHR24261">
    <property type="entry name" value="PLASMINOGEN-RELATED"/>
    <property type="match status" value="1"/>
</dbReference>
<dbReference type="Pfam" id="PF00051">
    <property type="entry name" value="Kringle"/>
    <property type="match status" value="1"/>
</dbReference>
<dbReference type="PRINTS" id="PR00018">
    <property type="entry name" value="KRINGLE"/>
</dbReference>
<dbReference type="SMART" id="SM00130">
    <property type="entry name" value="KR"/>
    <property type="match status" value="1"/>
</dbReference>
<dbReference type="SUPFAM" id="SSF57414">
    <property type="entry name" value="Hairpin loop containing domain-like"/>
    <property type="match status" value="1"/>
</dbReference>
<dbReference type="SUPFAM" id="SSF57440">
    <property type="entry name" value="Kringle-like"/>
    <property type="match status" value="1"/>
</dbReference>
<dbReference type="PROSITE" id="PS00021">
    <property type="entry name" value="KRINGLE_1"/>
    <property type="match status" value="1"/>
</dbReference>
<dbReference type="PROSITE" id="PS50070">
    <property type="entry name" value="KRINGLE_2"/>
    <property type="match status" value="1"/>
</dbReference>
<proteinExistence type="evidence at protein level"/>
<name>PLMN_CAPHI</name>
<gene>
    <name type="primary">PLG</name>
</gene>
<sequence>DLLDDYVNTQGASLLTLSRKKLAGRSVEDCAAKCEEEAQDCYHGNGQSYRGTSSTTVTGRKCQSWSSMIPHRHQKTPESYPNAGLTMNYCRNPDADKSPWCYTTDPRVRWEFCNLKKCSEDSE</sequence>